<sequence length="802" mass="89157">MARYNPLAFTSGPVVFFITITYTALLIALLLTHLTLPSYPSHPPLGINLTQAWSDLEHITREFHPYNSHANDNVRAYLLSRIEHMMASKKLGSDQVQIIDDNISNATFSSGNTTVYFEGTNLIVAVRGSHDDQAFNDRNRRPDNGGVLVNAHYDSVSSGYGATDDGVGVVSVLQLLSFFTEPKNWPKRTVVLLLNNGEEDFLNGAKAFMRHDISQVPHTFVNLEGAGAGGRAAMFRSTDTHVTRFYRKSEHPFGTVVSGDGFKKGLVRSETDYKVFFEELGLAGLDIAFIEPRAKYHTIEDSTRETSLNSVWHMLSAAIATTSGLAADTSTPDRESHDDAVWFDIFGKVFIVFQLHTFFALCVTLLVVAPLTLIGLAWSLHKADRNYLFARKAFVYSADDDEPIHLYGWRGFFRFPIAFGIATSIVVGLAMMLSAWFAVSWFLLHGADAMRPSALQRMYSLLWLFIGSFCLLVFFTILANNHQVAAGYPSLFCFATVFLANVLSFLELFLAPPKSAYAWNVHQNADGGSRPLTSSATAARSDNRATTDDDATETTSLLSGNRRSFARHDAGRRDAINEGANSQEPESRRRLDLGQPHSGEQEWSGKLPSWIWIVQFSLLAPMIVILVGQIALLLTSALYQTPSDGNSPLYIYTSIAALAVFLVAPIGPFIHRFTHHVPTFLFLLCVATTIYNLVAFPFSEQHKLKVYFVQRVDCDTGVNTVSLTGLDGYVQRIAGNMPSAQQSSLNCSTPDIVTRKELRMCEWEGLHPNVVSPTSQYSNKTRATDWIDYEIFHDDSNNRGRR</sequence>
<evidence type="ECO:0000250" key="1">
    <source>
        <dbReference type="UniProtKB" id="P38244"/>
    </source>
</evidence>
<evidence type="ECO:0000250" key="2">
    <source>
        <dbReference type="UniProtKB" id="P80561"/>
    </source>
</evidence>
<evidence type="ECO:0000255" key="3"/>
<evidence type="ECO:0000255" key="4">
    <source>
        <dbReference type="PROSITE-ProRule" id="PRU00498"/>
    </source>
</evidence>
<evidence type="ECO:0000256" key="5">
    <source>
        <dbReference type="SAM" id="MobiDB-lite"/>
    </source>
</evidence>
<evidence type="ECO:0000305" key="6"/>
<organism>
    <name type="scientific">Leptosphaeria maculans (strain JN3 / isolate v23.1.3 / race Av1-4-5-6-7-8)</name>
    <name type="common">Blackleg fungus</name>
    <name type="synonym">Phoma lingam</name>
    <dbReference type="NCBI Taxonomy" id="985895"/>
    <lineage>
        <taxon>Eukaryota</taxon>
        <taxon>Fungi</taxon>
        <taxon>Dikarya</taxon>
        <taxon>Ascomycota</taxon>
        <taxon>Pezizomycotina</taxon>
        <taxon>Dothideomycetes</taxon>
        <taxon>Pleosporomycetidae</taxon>
        <taxon>Pleosporales</taxon>
        <taxon>Pleosporineae</taxon>
        <taxon>Leptosphaeriaceae</taxon>
        <taxon>Plenodomus</taxon>
        <taxon>Plenodomus lingam/Leptosphaeria maculans species complex</taxon>
    </lineage>
</organism>
<accession>E4ZQC4</accession>
<keyword id="KW-0325">Glycoprotein</keyword>
<keyword id="KW-0378">Hydrolase</keyword>
<keyword id="KW-0472">Membrane</keyword>
<keyword id="KW-0479">Metal-binding</keyword>
<keyword id="KW-0482">Metalloprotease</keyword>
<keyword id="KW-0645">Protease</keyword>
<keyword id="KW-1185">Reference proteome</keyword>
<keyword id="KW-0812">Transmembrane</keyword>
<keyword id="KW-1133">Transmembrane helix</keyword>
<keyword id="KW-0926">Vacuole</keyword>
<keyword id="KW-0862">Zinc</keyword>
<dbReference type="EC" id="3.4.-.-" evidence="6"/>
<dbReference type="EMBL" id="FP929116">
    <property type="protein sequence ID" value="CBX93599.1"/>
    <property type="molecule type" value="Genomic_DNA"/>
</dbReference>
<dbReference type="RefSeq" id="XP_003837039.1">
    <property type="nucleotide sequence ID" value="XM_003836991.1"/>
</dbReference>
<dbReference type="SMR" id="E4ZQC4"/>
<dbReference type="FunCoup" id="E4ZQC4">
    <property type="interactions" value="3"/>
</dbReference>
<dbReference type="STRING" id="985895.E4ZQC4"/>
<dbReference type="EnsemblFungi" id="CBX93599">
    <property type="protein sequence ID" value="CBX93599"/>
    <property type="gene ID" value="LEMA_P032730.1"/>
</dbReference>
<dbReference type="VEuPathDB" id="FungiDB:LEMA_P032730.1"/>
<dbReference type="eggNOG" id="KOG2194">
    <property type="taxonomic scope" value="Eukaryota"/>
</dbReference>
<dbReference type="HOGENOM" id="CLU_006412_1_0_1"/>
<dbReference type="InParanoid" id="E4ZQC4"/>
<dbReference type="OMA" id="TPWPVTI"/>
<dbReference type="OrthoDB" id="76293at2759"/>
<dbReference type="Proteomes" id="UP000002668">
    <property type="component" value="Genome"/>
</dbReference>
<dbReference type="GO" id="GO:0005774">
    <property type="term" value="C:vacuolar membrane"/>
    <property type="evidence" value="ECO:0007669"/>
    <property type="project" value="UniProtKB-SubCell"/>
</dbReference>
<dbReference type="GO" id="GO:0046872">
    <property type="term" value="F:metal ion binding"/>
    <property type="evidence" value="ECO:0007669"/>
    <property type="project" value="UniProtKB-KW"/>
</dbReference>
<dbReference type="GO" id="GO:0008235">
    <property type="term" value="F:metalloexopeptidase activity"/>
    <property type="evidence" value="ECO:0007669"/>
    <property type="project" value="InterPro"/>
</dbReference>
<dbReference type="GO" id="GO:0006508">
    <property type="term" value="P:proteolysis"/>
    <property type="evidence" value="ECO:0007669"/>
    <property type="project" value="UniProtKB-KW"/>
</dbReference>
<dbReference type="CDD" id="cd03875">
    <property type="entry name" value="M28_Fxna_like"/>
    <property type="match status" value="1"/>
</dbReference>
<dbReference type="FunFam" id="3.40.630.10:FF:000057">
    <property type="entry name" value="Vacuolar membrane protease"/>
    <property type="match status" value="1"/>
</dbReference>
<dbReference type="Gene3D" id="3.40.630.10">
    <property type="entry name" value="Zn peptidases"/>
    <property type="match status" value="1"/>
</dbReference>
<dbReference type="InterPro" id="IPR048024">
    <property type="entry name" value="Fxna-like_M28_dom"/>
</dbReference>
<dbReference type="InterPro" id="IPR045175">
    <property type="entry name" value="M28_fam"/>
</dbReference>
<dbReference type="InterPro" id="IPR007484">
    <property type="entry name" value="Peptidase_M28"/>
</dbReference>
<dbReference type="InterPro" id="IPR053975">
    <property type="entry name" value="PFF1_C"/>
</dbReference>
<dbReference type="InterPro" id="IPR053976">
    <property type="entry name" value="PFF1_TM"/>
</dbReference>
<dbReference type="PANTHER" id="PTHR12147">
    <property type="entry name" value="METALLOPEPTIDASE M28 FAMILY MEMBER"/>
    <property type="match status" value="1"/>
</dbReference>
<dbReference type="PANTHER" id="PTHR12147:SF58">
    <property type="entry name" value="VACUOLAR MEMBRANE PROTEASE"/>
    <property type="match status" value="1"/>
</dbReference>
<dbReference type="Pfam" id="PF04389">
    <property type="entry name" value="Peptidase_M28"/>
    <property type="match status" value="1"/>
</dbReference>
<dbReference type="Pfam" id="PF22250">
    <property type="entry name" value="PFF1_C"/>
    <property type="match status" value="1"/>
</dbReference>
<dbReference type="Pfam" id="PF22251">
    <property type="entry name" value="PFF1_TM"/>
    <property type="match status" value="1"/>
</dbReference>
<dbReference type="SUPFAM" id="SSF53187">
    <property type="entry name" value="Zn-dependent exopeptidases"/>
    <property type="match status" value="1"/>
</dbReference>
<protein>
    <recommendedName>
        <fullName evidence="1">Vacuolar membrane protease</fullName>
        <ecNumber evidence="6">3.4.-.-</ecNumber>
    </recommendedName>
    <alternativeName>
        <fullName evidence="1">FXNA-related family protease 1</fullName>
    </alternativeName>
</protein>
<gene>
    <name type="ORF">Lema_P032730</name>
</gene>
<proteinExistence type="inferred from homology"/>
<reference key="1">
    <citation type="journal article" date="2011" name="Nat. Commun.">
        <title>Effector diversification within compartments of the Leptosphaeria maculans genome affected by Repeat-Induced Point mutations.</title>
        <authorList>
            <person name="Rouxel T."/>
            <person name="Grandaubert J."/>
            <person name="Hane J.K."/>
            <person name="Hoede C."/>
            <person name="van de Wouw A.P."/>
            <person name="Couloux A."/>
            <person name="Dominguez V."/>
            <person name="Anthouard V."/>
            <person name="Bally P."/>
            <person name="Bourras S."/>
            <person name="Cozijnsen A.J."/>
            <person name="Ciuffetti L.M."/>
            <person name="Degrave A."/>
            <person name="Dilmaghani A."/>
            <person name="Duret L."/>
            <person name="Fudal I."/>
            <person name="Goodwin S.B."/>
            <person name="Gout L."/>
            <person name="Glaser N."/>
            <person name="Linglin J."/>
            <person name="Kema G.H.J."/>
            <person name="Lapalu N."/>
            <person name="Lawrence C.B."/>
            <person name="May K."/>
            <person name="Meyer M."/>
            <person name="Ollivier B."/>
            <person name="Poulain J."/>
            <person name="Schoch C.L."/>
            <person name="Simon A."/>
            <person name="Spatafora J.W."/>
            <person name="Stachowiak A."/>
            <person name="Turgeon B.G."/>
            <person name="Tyler B.M."/>
            <person name="Vincent D."/>
            <person name="Weissenbach J."/>
            <person name="Amselem J."/>
            <person name="Quesneville H."/>
            <person name="Oliver R.P."/>
            <person name="Wincker P."/>
            <person name="Balesdent M.-H."/>
            <person name="Howlett B.J."/>
        </authorList>
    </citation>
    <scope>NUCLEOTIDE SEQUENCE [LARGE SCALE GENOMIC DNA]</scope>
    <source>
        <strain>JN3 / isolate v23.1.3 / race Av1-4-5-6-7-8</strain>
    </source>
</reference>
<feature type="chain" id="PRO_0000411720" description="Vacuolar membrane protease">
    <location>
        <begin position="1"/>
        <end position="802"/>
    </location>
</feature>
<feature type="topological domain" description="Cytoplasmic" evidence="1">
    <location>
        <begin position="1"/>
        <end position="13"/>
    </location>
</feature>
<feature type="transmembrane region" description="Helical; Name=1" evidence="3">
    <location>
        <begin position="14"/>
        <end position="34"/>
    </location>
</feature>
<feature type="topological domain" description="Vacuolar" evidence="1">
    <location>
        <begin position="35"/>
        <end position="357"/>
    </location>
</feature>
<feature type="transmembrane region" description="Helical; Name=2" evidence="3">
    <location>
        <begin position="358"/>
        <end position="378"/>
    </location>
</feature>
<feature type="topological domain" description="Cytoplasmic" evidence="1">
    <location>
        <begin position="379"/>
        <end position="389"/>
    </location>
</feature>
<feature type="transmembrane region" description="Helical; Name=3" evidence="1">
    <location>
        <begin position="390"/>
        <end position="409"/>
    </location>
</feature>
<feature type="topological domain" description="Vacuolar" evidence="1">
    <location>
        <begin position="410"/>
        <end position="423"/>
    </location>
</feature>
<feature type="transmembrane region" description="Helical; Name=4" evidence="3">
    <location>
        <begin position="424"/>
        <end position="444"/>
    </location>
</feature>
<feature type="topological domain" description="Cytoplasmic" evidence="1">
    <location>
        <begin position="445"/>
        <end position="457"/>
    </location>
</feature>
<feature type="transmembrane region" description="Helical; Name=5" evidence="3">
    <location>
        <begin position="458"/>
        <end position="478"/>
    </location>
</feature>
<feature type="topological domain" description="Vacuolar" evidence="1">
    <location>
        <begin position="479"/>
        <end position="490"/>
    </location>
</feature>
<feature type="transmembrane region" description="Helical; Name=6" evidence="3">
    <location>
        <begin position="491"/>
        <end position="511"/>
    </location>
</feature>
<feature type="topological domain" description="Cytoplasmic" evidence="1">
    <location>
        <begin position="512"/>
        <end position="609"/>
    </location>
</feature>
<feature type="transmembrane region" description="Helical; Name=7" evidence="3">
    <location>
        <begin position="610"/>
        <end position="630"/>
    </location>
</feature>
<feature type="topological domain" description="Vacuolar" evidence="1">
    <location>
        <begin position="631"/>
        <end position="649"/>
    </location>
</feature>
<feature type="transmembrane region" description="Helical; Name=8" evidence="3">
    <location>
        <begin position="650"/>
        <end position="670"/>
    </location>
</feature>
<feature type="topological domain" description="Cytoplasmic" evidence="1">
    <location>
        <begin position="671"/>
        <end position="677"/>
    </location>
</feature>
<feature type="transmembrane region" description="Helical; Name=9" evidence="3">
    <location>
        <begin position="678"/>
        <end position="698"/>
    </location>
</feature>
<feature type="topological domain" description="Vacuolar" evidence="1">
    <location>
        <begin position="699"/>
        <end position="802"/>
    </location>
</feature>
<feature type="region of interest" description="Disordered" evidence="5">
    <location>
        <begin position="528"/>
        <end position="554"/>
    </location>
</feature>
<feature type="region of interest" description="Disordered" evidence="5">
    <location>
        <begin position="570"/>
        <end position="603"/>
    </location>
</feature>
<feature type="active site" description="Proton acceptor" evidence="2">
    <location>
        <position position="198"/>
    </location>
</feature>
<feature type="binding site" evidence="2">
    <location>
        <position position="152"/>
    </location>
    <ligand>
        <name>Zn(2+)</name>
        <dbReference type="ChEBI" id="CHEBI:29105"/>
        <label>1</label>
        <note>catalytic</note>
    </ligand>
</feature>
<feature type="binding site" evidence="2">
    <location>
        <position position="164"/>
    </location>
    <ligand>
        <name>Zn(2+)</name>
        <dbReference type="ChEBI" id="CHEBI:29105"/>
        <label>1</label>
        <note>catalytic</note>
    </ligand>
</feature>
<feature type="binding site" evidence="2">
    <location>
        <position position="164"/>
    </location>
    <ligand>
        <name>Zn(2+)</name>
        <dbReference type="ChEBI" id="CHEBI:29105"/>
        <label>2</label>
        <note>catalytic</note>
    </ligand>
</feature>
<feature type="binding site" evidence="2">
    <location>
        <position position="199"/>
    </location>
    <ligand>
        <name>Zn(2+)</name>
        <dbReference type="ChEBI" id="CHEBI:29105"/>
        <label>2</label>
        <note>catalytic</note>
    </ligand>
</feature>
<feature type="binding site" evidence="2">
    <location>
        <position position="224"/>
    </location>
    <ligand>
        <name>Zn(2+)</name>
        <dbReference type="ChEBI" id="CHEBI:29105"/>
        <label>1</label>
        <note>catalytic</note>
    </ligand>
</feature>
<feature type="binding site" evidence="2">
    <location>
        <position position="297"/>
    </location>
    <ligand>
        <name>Zn(2+)</name>
        <dbReference type="ChEBI" id="CHEBI:29105"/>
        <label>2</label>
        <note>catalytic</note>
    </ligand>
</feature>
<feature type="site" description="Transition state stabilizer" evidence="2">
    <location>
        <position position="296"/>
    </location>
</feature>
<feature type="glycosylation site" description="N-linked (GlcNAc...) asparagine" evidence="4">
    <location>
        <position position="48"/>
    </location>
</feature>
<feature type="glycosylation site" description="N-linked (GlcNAc...) asparagine" evidence="4">
    <location>
        <position position="102"/>
    </location>
</feature>
<feature type="glycosylation site" description="N-linked (GlcNAc...) asparagine" evidence="4">
    <location>
        <position position="105"/>
    </location>
</feature>
<feature type="glycosylation site" description="N-linked (GlcNAc...) asparagine" evidence="4">
    <location>
        <position position="112"/>
    </location>
</feature>
<feature type="glycosylation site" description="N-linked (GlcNAc...) asparagine" evidence="4">
    <location>
        <position position="746"/>
    </location>
</feature>
<feature type="glycosylation site" description="N-linked (GlcNAc...) asparagine" evidence="4">
    <location>
        <position position="779"/>
    </location>
</feature>
<name>PFF1_LEPMJ</name>
<comment type="function">
    <text evidence="1">May be involved in vacuolar sorting and osmoregulation.</text>
</comment>
<comment type="cofactor">
    <cofactor evidence="2">
        <name>Zn(2+)</name>
        <dbReference type="ChEBI" id="CHEBI:29105"/>
    </cofactor>
    <text evidence="2">Binds 2 Zn(2+) ions per subunit.</text>
</comment>
<comment type="subcellular location">
    <subcellularLocation>
        <location evidence="1">Vacuole membrane</location>
        <topology evidence="3">Multi-pass membrane protein</topology>
    </subcellularLocation>
</comment>
<comment type="similarity">
    <text evidence="6">Belongs to the peptidase M28 family.</text>
</comment>